<protein>
    <recommendedName>
        <fullName evidence="1">Adenylate kinase</fullName>
        <shortName evidence="1">AK</shortName>
        <ecNumber evidence="1">2.7.4.3</ecNumber>
    </recommendedName>
    <alternativeName>
        <fullName evidence="1">ATP-AMP transphosphorylase</fullName>
    </alternativeName>
    <alternativeName>
        <fullName evidence="1">ATP:AMP phosphotransferase</fullName>
    </alternativeName>
    <alternativeName>
        <fullName evidence="1">Adenylate monophosphate kinase</fullName>
    </alternativeName>
</protein>
<keyword id="KW-0067">ATP-binding</keyword>
<keyword id="KW-0963">Cytoplasm</keyword>
<keyword id="KW-0418">Kinase</keyword>
<keyword id="KW-0545">Nucleotide biosynthesis</keyword>
<keyword id="KW-0547">Nucleotide-binding</keyword>
<keyword id="KW-0808">Transferase</keyword>
<evidence type="ECO:0000255" key="1">
    <source>
        <dbReference type="HAMAP-Rule" id="MF_00235"/>
    </source>
</evidence>
<sequence length="216" mass="23207">MRVILLGAPGAGKGTQAKFITEKFGIPQISTGDMLRAAVKAGTPLGLELKKVMDAGQLVSDELIISLVKERIAQPDCANGCLFDGFPRTIPQAEAMVAAGVDIDAVVEIAVDDEEIVGRMAGRRVHLASGRTYHIQYNPPKVEGKDDVTGEDLIQRDDDKEETVRHRLSVYHTQTKPLVDFYQKLSAANAGKPKYSHIEGVGSVDAITAKVLAALS</sequence>
<comment type="function">
    <text evidence="1">Catalyzes the reversible transfer of the terminal phosphate group between ATP and AMP. Plays an important role in cellular energy homeostasis and in adenine nucleotide metabolism.</text>
</comment>
<comment type="catalytic activity">
    <reaction evidence="1">
        <text>AMP + ATP = 2 ADP</text>
        <dbReference type="Rhea" id="RHEA:12973"/>
        <dbReference type="ChEBI" id="CHEBI:30616"/>
        <dbReference type="ChEBI" id="CHEBI:456215"/>
        <dbReference type="ChEBI" id="CHEBI:456216"/>
        <dbReference type="EC" id="2.7.4.3"/>
    </reaction>
</comment>
<comment type="pathway">
    <text evidence="1">Purine metabolism; AMP biosynthesis via salvage pathway; AMP from ADP: step 1/1.</text>
</comment>
<comment type="subunit">
    <text evidence="1">Monomer.</text>
</comment>
<comment type="subcellular location">
    <subcellularLocation>
        <location evidence="1">Cytoplasm</location>
    </subcellularLocation>
</comment>
<comment type="domain">
    <text evidence="1">Consists of three domains, a large central CORE domain and two small peripheral domains, NMPbind and LID, which undergo movements during catalysis. The LID domain closes over the site of phosphoryl transfer upon ATP binding. Assembling and dissambling the active center during each catalytic cycle provides an effective means to prevent ATP hydrolysis.</text>
</comment>
<comment type="similarity">
    <text evidence="1">Belongs to the adenylate kinase family.</text>
</comment>
<dbReference type="EC" id="2.7.4.3" evidence="1"/>
<dbReference type="EMBL" id="CP000926">
    <property type="protein sequence ID" value="ABY97019.1"/>
    <property type="molecule type" value="Genomic_DNA"/>
</dbReference>
<dbReference type="RefSeq" id="WP_012270800.1">
    <property type="nucleotide sequence ID" value="NC_010322.1"/>
</dbReference>
<dbReference type="SMR" id="B0KS64"/>
<dbReference type="KEGG" id="ppg:PputGB1_1111"/>
<dbReference type="eggNOG" id="COG0563">
    <property type="taxonomic scope" value="Bacteria"/>
</dbReference>
<dbReference type="HOGENOM" id="CLU_032354_1_2_6"/>
<dbReference type="UniPathway" id="UPA00588">
    <property type="reaction ID" value="UER00649"/>
</dbReference>
<dbReference type="Proteomes" id="UP000002157">
    <property type="component" value="Chromosome"/>
</dbReference>
<dbReference type="GO" id="GO:0005737">
    <property type="term" value="C:cytoplasm"/>
    <property type="evidence" value="ECO:0007669"/>
    <property type="project" value="UniProtKB-SubCell"/>
</dbReference>
<dbReference type="GO" id="GO:0004017">
    <property type="term" value="F:adenylate kinase activity"/>
    <property type="evidence" value="ECO:0007669"/>
    <property type="project" value="UniProtKB-UniRule"/>
</dbReference>
<dbReference type="GO" id="GO:0005524">
    <property type="term" value="F:ATP binding"/>
    <property type="evidence" value="ECO:0007669"/>
    <property type="project" value="UniProtKB-UniRule"/>
</dbReference>
<dbReference type="GO" id="GO:0044209">
    <property type="term" value="P:AMP salvage"/>
    <property type="evidence" value="ECO:0007669"/>
    <property type="project" value="UniProtKB-UniRule"/>
</dbReference>
<dbReference type="CDD" id="cd01428">
    <property type="entry name" value="ADK"/>
    <property type="match status" value="1"/>
</dbReference>
<dbReference type="FunFam" id="3.40.50.300:FF:000106">
    <property type="entry name" value="Adenylate kinase mitochondrial"/>
    <property type="match status" value="1"/>
</dbReference>
<dbReference type="Gene3D" id="3.40.50.300">
    <property type="entry name" value="P-loop containing nucleotide triphosphate hydrolases"/>
    <property type="match status" value="1"/>
</dbReference>
<dbReference type="HAMAP" id="MF_00235">
    <property type="entry name" value="Adenylate_kinase_Adk"/>
    <property type="match status" value="1"/>
</dbReference>
<dbReference type="InterPro" id="IPR006259">
    <property type="entry name" value="Adenyl_kin_sub"/>
</dbReference>
<dbReference type="InterPro" id="IPR000850">
    <property type="entry name" value="Adenylat/UMP-CMP_kin"/>
</dbReference>
<dbReference type="InterPro" id="IPR033690">
    <property type="entry name" value="Adenylat_kinase_CS"/>
</dbReference>
<dbReference type="InterPro" id="IPR007862">
    <property type="entry name" value="Adenylate_kinase_lid-dom"/>
</dbReference>
<dbReference type="InterPro" id="IPR027417">
    <property type="entry name" value="P-loop_NTPase"/>
</dbReference>
<dbReference type="NCBIfam" id="TIGR01351">
    <property type="entry name" value="adk"/>
    <property type="match status" value="1"/>
</dbReference>
<dbReference type="NCBIfam" id="NF001379">
    <property type="entry name" value="PRK00279.1-1"/>
    <property type="match status" value="1"/>
</dbReference>
<dbReference type="NCBIfam" id="NF001380">
    <property type="entry name" value="PRK00279.1-2"/>
    <property type="match status" value="1"/>
</dbReference>
<dbReference type="NCBIfam" id="NF001381">
    <property type="entry name" value="PRK00279.1-3"/>
    <property type="match status" value="1"/>
</dbReference>
<dbReference type="NCBIfam" id="NF011100">
    <property type="entry name" value="PRK14527.1"/>
    <property type="match status" value="1"/>
</dbReference>
<dbReference type="PANTHER" id="PTHR23359">
    <property type="entry name" value="NUCLEOTIDE KINASE"/>
    <property type="match status" value="1"/>
</dbReference>
<dbReference type="Pfam" id="PF00406">
    <property type="entry name" value="ADK"/>
    <property type="match status" value="1"/>
</dbReference>
<dbReference type="Pfam" id="PF05191">
    <property type="entry name" value="ADK_lid"/>
    <property type="match status" value="1"/>
</dbReference>
<dbReference type="PRINTS" id="PR00094">
    <property type="entry name" value="ADENYLTKNASE"/>
</dbReference>
<dbReference type="SUPFAM" id="SSF52540">
    <property type="entry name" value="P-loop containing nucleoside triphosphate hydrolases"/>
    <property type="match status" value="1"/>
</dbReference>
<dbReference type="PROSITE" id="PS00113">
    <property type="entry name" value="ADENYLATE_KINASE"/>
    <property type="match status" value="1"/>
</dbReference>
<organism>
    <name type="scientific">Pseudomonas putida (strain GB-1)</name>
    <dbReference type="NCBI Taxonomy" id="76869"/>
    <lineage>
        <taxon>Bacteria</taxon>
        <taxon>Pseudomonadati</taxon>
        <taxon>Pseudomonadota</taxon>
        <taxon>Gammaproteobacteria</taxon>
        <taxon>Pseudomonadales</taxon>
        <taxon>Pseudomonadaceae</taxon>
        <taxon>Pseudomonas</taxon>
    </lineage>
</organism>
<name>KAD_PSEPG</name>
<proteinExistence type="inferred from homology"/>
<reference key="1">
    <citation type="submission" date="2008-01" db="EMBL/GenBank/DDBJ databases">
        <title>Complete sequence of Pseudomonas putida GB-1.</title>
        <authorList>
            <consortium name="US DOE Joint Genome Institute"/>
            <person name="Copeland A."/>
            <person name="Lucas S."/>
            <person name="Lapidus A."/>
            <person name="Barry K."/>
            <person name="Glavina del Rio T."/>
            <person name="Dalin E."/>
            <person name="Tice H."/>
            <person name="Pitluck S."/>
            <person name="Bruce D."/>
            <person name="Goodwin L."/>
            <person name="Chertkov O."/>
            <person name="Brettin T."/>
            <person name="Detter J.C."/>
            <person name="Han C."/>
            <person name="Kuske C.R."/>
            <person name="Schmutz J."/>
            <person name="Larimer F."/>
            <person name="Land M."/>
            <person name="Hauser L."/>
            <person name="Kyrpides N."/>
            <person name="Kim E."/>
            <person name="McCarthy J.K."/>
            <person name="Richardson P."/>
        </authorList>
    </citation>
    <scope>NUCLEOTIDE SEQUENCE [LARGE SCALE GENOMIC DNA]</scope>
    <source>
        <strain>GB-1</strain>
    </source>
</reference>
<feature type="chain" id="PRO_1000078286" description="Adenylate kinase">
    <location>
        <begin position="1"/>
        <end position="216"/>
    </location>
</feature>
<feature type="region of interest" description="NMP" evidence="1">
    <location>
        <begin position="30"/>
        <end position="59"/>
    </location>
</feature>
<feature type="region of interest" description="LID" evidence="1">
    <location>
        <begin position="122"/>
        <end position="159"/>
    </location>
</feature>
<feature type="binding site" evidence="1">
    <location>
        <begin position="10"/>
        <end position="15"/>
    </location>
    <ligand>
        <name>ATP</name>
        <dbReference type="ChEBI" id="CHEBI:30616"/>
    </ligand>
</feature>
<feature type="binding site" evidence="1">
    <location>
        <position position="31"/>
    </location>
    <ligand>
        <name>AMP</name>
        <dbReference type="ChEBI" id="CHEBI:456215"/>
    </ligand>
</feature>
<feature type="binding site" evidence="1">
    <location>
        <position position="36"/>
    </location>
    <ligand>
        <name>AMP</name>
        <dbReference type="ChEBI" id="CHEBI:456215"/>
    </ligand>
</feature>
<feature type="binding site" evidence="1">
    <location>
        <begin position="57"/>
        <end position="59"/>
    </location>
    <ligand>
        <name>AMP</name>
        <dbReference type="ChEBI" id="CHEBI:456215"/>
    </ligand>
</feature>
<feature type="binding site" evidence="1">
    <location>
        <begin position="85"/>
        <end position="88"/>
    </location>
    <ligand>
        <name>AMP</name>
        <dbReference type="ChEBI" id="CHEBI:456215"/>
    </ligand>
</feature>
<feature type="binding site" evidence="1">
    <location>
        <position position="92"/>
    </location>
    <ligand>
        <name>AMP</name>
        <dbReference type="ChEBI" id="CHEBI:456215"/>
    </ligand>
</feature>
<feature type="binding site" evidence="1">
    <location>
        <position position="123"/>
    </location>
    <ligand>
        <name>ATP</name>
        <dbReference type="ChEBI" id="CHEBI:30616"/>
    </ligand>
</feature>
<feature type="binding site" evidence="1">
    <location>
        <begin position="132"/>
        <end position="133"/>
    </location>
    <ligand>
        <name>ATP</name>
        <dbReference type="ChEBI" id="CHEBI:30616"/>
    </ligand>
</feature>
<feature type="binding site" evidence="1">
    <location>
        <position position="156"/>
    </location>
    <ligand>
        <name>AMP</name>
        <dbReference type="ChEBI" id="CHEBI:456215"/>
    </ligand>
</feature>
<feature type="binding site" evidence="1">
    <location>
        <position position="167"/>
    </location>
    <ligand>
        <name>AMP</name>
        <dbReference type="ChEBI" id="CHEBI:456215"/>
    </ligand>
</feature>
<feature type="binding site" evidence="1">
    <location>
        <position position="202"/>
    </location>
    <ligand>
        <name>ATP</name>
        <dbReference type="ChEBI" id="CHEBI:30616"/>
    </ligand>
</feature>
<gene>
    <name evidence="1" type="primary">adk</name>
    <name type="ordered locus">PputGB1_1111</name>
</gene>
<accession>B0KS64</accession>